<name>CMOB_PSET1</name>
<gene>
    <name evidence="1" type="primary">cmoB</name>
    <name type="ordered locus">PSHAa1946</name>
</gene>
<evidence type="ECO:0000255" key="1">
    <source>
        <dbReference type="HAMAP-Rule" id="MF_01590"/>
    </source>
</evidence>
<organism>
    <name type="scientific">Pseudoalteromonas translucida (strain TAC 125)</name>
    <dbReference type="NCBI Taxonomy" id="326442"/>
    <lineage>
        <taxon>Bacteria</taxon>
        <taxon>Pseudomonadati</taxon>
        <taxon>Pseudomonadota</taxon>
        <taxon>Gammaproteobacteria</taxon>
        <taxon>Alteromonadales</taxon>
        <taxon>Pseudoalteromonadaceae</taxon>
        <taxon>Pseudoalteromonas</taxon>
    </lineage>
</organism>
<sequence length="322" mass="36856">MSQWFNQFYAAIAQSPLSHWLETLPAQLKHWQLEASHGDLPQWQKVLKNLPEVKTQHVDITSQVKIGTPGEMTDGEQKQTLHLLKRMMPWRKGPFSVHGIEIDTEWRSDWKWDRLLPHIEPLKGRTVLDIGCGSGYHLWRMRGEGAQFVVGIDPSDLFLCQFQAIKHFNPDENVHLLPLGVEALPELKAFDTVFSMGVLYHRRSPIDFLAQLKAQLRPGGELVLETLVIEGDENTVLVPTDRYAKMRNVWFIPSTAALKLWMERVGFKNVQIKDCAITTLDEQRKTAWMENESLVDFLDPNDTSKTIEGYPAPLRAILTAKA</sequence>
<proteinExistence type="inferred from homology"/>
<accession>Q3IIQ3</accession>
<protein>
    <recommendedName>
        <fullName evidence="1">tRNA U34 carboxymethyltransferase</fullName>
        <ecNumber evidence="1">2.5.1.-</ecNumber>
    </recommendedName>
</protein>
<feature type="chain" id="PRO_0000313943" description="tRNA U34 carboxymethyltransferase">
    <location>
        <begin position="1"/>
        <end position="322"/>
    </location>
</feature>
<feature type="binding site" evidence="1">
    <location>
        <position position="92"/>
    </location>
    <ligand>
        <name>carboxy-S-adenosyl-L-methionine</name>
        <dbReference type="ChEBI" id="CHEBI:134278"/>
    </ligand>
</feature>
<feature type="binding site" evidence="1">
    <location>
        <position position="106"/>
    </location>
    <ligand>
        <name>carboxy-S-adenosyl-L-methionine</name>
        <dbReference type="ChEBI" id="CHEBI:134278"/>
    </ligand>
</feature>
<feature type="binding site" evidence="1">
    <location>
        <position position="111"/>
    </location>
    <ligand>
        <name>carboxy-S-adenosyl-L-methionine</name>
        <dbReference type="ChEBI" id="CHEBI:134278"/>
    </ligand>
</feature>
<feature type="binding site" evidence="1">
    <location>
        <position position="131"/>
    </location>
    <ligand>
        <name>carboxy-S-adenosyl-L-methionine</name>
        <dbReference type="ChEBI" id="CHEBI:134278"/>
    </ligand>
</feature>
<feature type="binding site" evidence="1">
    <location>
        <begin position="153"/>
        <end position="155"/>
    </location>
    <ligand>
        <name>carboxy-S-adenosyl-L-methionine</name>
        <dbReference type="ChEBI" id="CHEBI:134278"/>
    </ligand>
</feature>
<feature type="binding site" evidence="1">
    <location>
        <begin position="181"/>
        <end position="182"/>
    </location>
    <ligand>
        <name>carboxy-S-adenosyl-L-methionine</name>
        <dbReference type="ChEBI" id="CHEBI:134278"/>
    </ligand>
</feature>
<feature type="binding site" evidence="1">
    <location>
        <position position="196"/>
    </location>
    <ligand>
        <name>carboxy-S-adenosyl-L-methionine</name>
        <dbReference type="ChEBI" id="CHEBI:134278"/>
    </ligand>
</feature>
<feature type="binding site" evidence="1">
    <location>
        <position position="200"/>
    </location>
    <ligand>
        <name>carboxy-S-adenosyl-L-methionine</name>
        <dbReference type="ChEBI" id="CHEBI:134278"/>
    </ligand>
</feature>
<feature type="binding site" evidence="1">
    <location>
        <position position="315"/>
    </location>
    <ligand>
        <name>carboxy-S-adenosyl-L-methionine</name>
        <dbReference type="ChEBI" id="CHEBI:134278"/>
    </ligand>
</feature>
<reference key="1">
    <citation type="journal article" date="2005" name="Genome Res.">
        <title>Coping with cold: the genome of the versatile marine Antarctica bacterium Pseudoalteromonas haloplanktis TAC125.</title>
        <authorList>
            <person name="Medigue C."/>
            <person name="Krin E."/>
            <person name="Pascal G."/>
            <person name="Barbe V."/>
            <person name="Bernsel A."/>
            <person name="Bertin P.N."/>
            <person name="Cheung F."/>
            <person name="Cruveiller S."/>
            <person name="D'Amico S."/>
            <person name="Duilio A."/>
            <person name="Fang G."/>
            <person name="Feller G."/>
            <person name="Ho C."/>
            <person name="Mangenot S."/>
            <person name="Marino G."/>
            <person name="Nilsson J."/>
            <person name="Parrilli E."/>
            <person name="Rocha E.P.C."/>
            <person name="Rouy Z."/>
            <person name="Sekowska A."/>
            <person name="Tutino M.L."/>
            <person name="Vallenet D."/>
            <person name="von Heijne G."/>
            <person name="Danchin A."/>
        </authorList>
    </citation>
    <scope>NUCLEOTIDE SEQUENCE [LARGE SCALE GENOMIC DNA]</scope>
    <source>
        <strain>TAC 125</strain>
    </source>
</reference>
<keyword id="KW-1185">Reference proteome</keyword>
<keyword id="KW-0808">Transferase</keyword>
<keyword id="KW-0819">tRNA processing</keyword>
<comment type="function">
    <text evidence="1">Catalyzes carboxymethyl transfer from carboxy-S-adenosyl-L-methionine (Cx-SAM) to 5-hydroxyuridine (ho5U) to form 5-carboxymethoxyuridine (cmo5U) at position 34 in tRNAs.</text>
</comment>
<comment type="catalytic activity">
    <reaction evidence="1">
        <text>carboxy-S-adenosyl-L-methionine + 5-hydroxyuridine(34) in tRNA = 5-carboxymethoxyuridine(34) in tRNA + S-adenosyl-L-homocysteine + H(+)</text>
        <dbReference type="Rhea" id="RHEA:52848"/>
        <dbReference type="Rhea" id="RHEA-COMP:13381"/>
        <dbReference type="Rhea" id="RHEA-COMP:13383"/>
        <dbReference type="ChEBI" id="CHEBI:15378"/>
        <dbReference type="ChEBI" id="CHEBI:57856"/>
        <dbReference type="ChEBI" id="CHEBI:134278"/>
        <dbReference type="ChEBI" id="CHEBI:136877"/>
        <dbReference type="ChEBI" id="CHEBI:136879"/>
    </reaction>
</comment>
<comment type="subunit">
    <text evidence="1">Homotetramer.</text>
</comment>
<comment type="similarity">
    <text evidence="1">Belongs to the class I-like SAM-binding methyltransferase superfamily. CmoB family.</text>
</comment>
<dbReference type="EC" id="2.5.1.-" evidence="1"/>
<dbReference type="EMBL" id="CR954246">
    <property type="protein sequence ID" value="CAI87010.1"/>
    <property type="molecule type" value="Genomic_DNA"/>
</dbReference>
<dbReference type="SMR" id="Q3IIQ3"/>
<dbReference type="STRING" id="326442.PSHAa1946"/>
<dbReference type="KEGG" id="pha:PSHAa1946"/>
<dbReference type="PATRIC" id="fig|326442.8.peg.1884"/>
<dbReference type="eggNOG" id="COG2227">
    <property type="taxonomic scope" value="Bacteria"/>
</dbReference>
<dbReference type="HOGENOM" id="CLU_052665_0_0_6"/>
<dbReference type="BioCyc" id="PHAL326442:PSHA_RS09610-MONOMER"/>
<dbReference type="Proteomes" id="UP000006843">
    <property type="component" value="Chromosome I"/>
</dbReference>
<dbReference type="GO" id="GO:0008168">
    <property type="term" value="F:methyltransferase activity"/>
    <property type="evidence" value="ECO:0007669"/>
    <property type="project" value="TreeGrafter"/>
</dbReference>
<dbReference type="GO" id="GO:0016765">
    <property type="term" value="F:transferase activity, transferring alkyl or aryl (other than methyl) groups"/>
    <property type="evidence" value="ECO:0007669"/>
    <property type="project" value="UniProtKB-UniRule"/>
</dbReference>
<dbReference type="GO" id="GO:0002098">
    <property type="term" value="P:tRNA wobble uridine modification"/>
    <property type="evidence" value="ECO:0007669"/>
    <property type="project" value="InterPro"/>
</dbReference>
<dbReference type="CDD" id="cd02440">
    <property type="entry name" value="AdoMet_MTases"/>
    <property type="match status" value="1"/>
</dbReference>
<dbReference type="Gene3D" id="3.40.50.150">
    <property type="entry name" value="Vaccinia Virus protein VP39"/>
    <property type="match status" value="1"/>
</dbReference>
<dbReference type="HAMAP" id="MF_01590">
    <property type="entry name" value="tRNA_carboxymethyltr_CmoB"/>
    <property type="match status" value="1"/>
</dbReference>
<dbReference type="InterPro" id="IPR010017">
    <property type="entry name" value="CmoB"/>
</dbReference>
<dbReference type="InterPro" id="IPR027555">
    <property type="entry name" value="Mo5U34_MeTrfas-like"/>
</dbReference>
<dbReference type="InterPro" id="IPR029063">
    <property type="entry name" value="SAM-dependent_MTases_sf"/>
</dbReference>
<dbReference type="NCBIfam" id="NF011650">
    <property type="entry name" value="PRK15068.1"/>
    <property type="match status" value="1"/>
</dbReference>
<dbReference type="NCBIfam" id="TIGR00452">
    <property type="entry name" value="tRNA 5-methoxyuridine(34)/uridine 5-oxyacetic acid(34) synthase CmoB"/>
    <property type="match status" value="1"/>
</dbReference>
<dbReference type="PANTHER" id="PTHR43464">
    <property type="entry name" value="METHYLTRANSFERASE"/>
    <property type="match status" value="1"/>
</dbReference>
<dbReference type="PANTHER" id="PTHR43464:SF95">
    <property type="entry name" value="TRNA U34 CARBOXYMETHYLTRANSFERASE"/>
    <property type="match status" value="1"/>
</dbReference>
<dbReference type="Pfam" id="PF08003">
    <property type="entry name" value="Methyltransf_9"/>
    <property type="match status" value="1"/>
</dbReference>
<dbReference type="SUPFAM" id="SSF53335">
    <property type="entry name" value="S-adenosyl-L-methionine-dependent methyltransferases"/>
    <property type="match status" value="1"/>
</dbReference>